<reference key="1">
    <citation type="journal article" date="2006" name="Nat. Biotechnol.">
        <title>The genome and transcriptomes of the anti-tumor agent Clostridium novyi-NT.</title>
        <authorList>
            <person name="Bettegowda C."/>
            <person name="Huang X."/>
            <person name="Lin J."/>
            <person name="Cheong I."/>
            <person name="Kohli M."/>
            <person name="Szabo S.A."/>
            <person name="Zhang X."/>
            <person name="Diaz L.A. Jr."/>
            <person name="Velculescu V.E."/>
            <person name="Parmigiani G."/>
            <person name="Kinzler K.W."/>
            <person name="Vogelstein B."/>
            <person name="Zhou S."/>
        </authorList>
    </citation>
    <scope>NUCLEOTIDE SEQUENCE [LARGE SCALE GENOMIC DNA]</scope>
    <source>
        <strain>NT</strain>
    </source>
</reference>
<organism>
    <name type="scientific">Clostridium novyi (strain NT)</name>
    <dbReference type="NCBI Taxonomy" id="386415"/>
    <lineage>
        <taxon>Bacteria</taxon>
        <taxon>Bacillati</taxon>
        <taxon>Bacillota</taxon>
        <taxon>Clostridia</taxon>
        <taxon>Eubacteriales</taxon>
        <taxon>Clostridiaceae</taxon>
        <taxon>Clostridium</taxon>
    </lineage>
</organism>
<proteinExistence type="inferred from homology"/>
<feature type="chain" id="PRO_1000016259" description="ATP phosphoribosyltransferase regulatory subunit">
    <location>
        <begin position="1"/>
        <end position="421"/>
    </location>
</feature>
<protein>
    <recommendedName>
        <fullName evidence="1">ATP phosphoribosyltransferase regulatory subunit</fullName>
    </recommendedName>
</protein>
<comment type="function">
    <text evidence="1">Required for the first step of histidine biosynthesis. May allow the feedback regulation of ATP phosphoribosyltransferase activity by histidine.</text>
</comment>
<comment type="pathway">
    <text evidence="1">Amino-acid biosynthesis; L-histidine biosynthesis; L-histidine from 5-phospho-alpha-D-ribose 1-diphosphate: step 1/9.</text>
</comment>
<comment type="subunit">
    <text evidence="1">Heteromultimer composed of HisG and HisZ subunits.</text>
</comment>
<comment type="subcellular location">
    <subcellularLocation>
        <location evidence="1">Cytoplasm</location>
    </subcellularLocation>
</comment>
<comment type="miscellaneous">
    <text>This function is generally fulfilled by the C-terminal part of HisG, which is missing in some bacteria such as this one.</text>
</comment>
<comment type="similarity">
    <text evidence="1">Belongs to the class-II aminoacyl-tRNA synthetase family. HisZ subfamily.</text>
</comment>
<gene>
    <name evidence="1" type="primary">hisZ</name>
    <name type="ordered locus">NT01CX_1060</name>
</gene>
<dbReference type="EMBL" id="CP000382">
    <property type="protein sequence ID" value="ABK61372.1"/>
    <property type="molecule type" value="Genomic_DNA"/>
</dbReference>
<dbReference type="RefSeq" id="WP_011721164.1">
    <property type="nucleotide sequence ID" value="NC_008593.1"/>
</dbReference>
<dbReference type="SMR" id="A0PXP2"/>
<dbReference type="STRING" id="386415.NT01CX_1060"/>
<dbReference type="KEGG" id="cno:NT01CX_1060"/>
<dbReference type="eggNOG" id="COG3705">
    <property type="taxonomic scope" value="Bacteria"/>
</dbReference>
<dbReference type="HOGENOM" id="CLU_025113_0_0_9"/>
<dbReference type="UniPathway" id="UPA00031">
    <property type="reaction ID" value="UER00006"/>
</dbReference>
<dbReference type="Proteomes" id="UP000008220">
    <property type="component" value="Chromosome"/>
</dbReference>
<dbReference type="GO" id="GO:0005737">
    <property type="term" value="C:cytoplasm"/>
    <property type="evidence" value="ECO:0007669"/>
    <property type="project" value="UniProtKB-SubCell"/>
</dbReference>
<dbReference type="GO" id="GO:0140096">
    <property type="term" value="F:catalytic activity, acting on a protein"/>
    <property type="evidence" value="ECO:0007669"/>
    <property type="project" value="UniProtKB-ARBA"/>
</dbReference>
<dbReference type="GO" id="GO:0004821">
    <property type="term" value="F:histidine-tRNA ligase activity"/>
    <property type="evidence" value="ECO:0007669"/>
    <property type="project" value="TreeGrafter"/>
</dbReference>
<dbReference type="GO" id="GO:0016740">
    <property type="term" value="F:transferase activity"/>
    <property type="evidence" value="ECO:0007669"/>
    <property type="project" value="UniProtKB-ARBA"/>
</dbReference>
<dbReference type="GO" id="GO:0006427">
    <property type="term" value="P:histidyl-tRNA aminoacylation"/>
    <property type="evidence" value="ECO:0007669"/>
    <property type="project" value="TreeGrafter"/>
</dbReference>
<dbReference type="GO" id="GO:0000105">
    <property type="term" value="P:L-histidine biosynthetic process"/>
    <property type="evidence" value="ECO:0007669"/>
    <property type="project" value="UniProtKB-UniRule"/>
</dbReference>
<dbReference type="CDD" id="cd00773">
    <property type="entry name" value="HisRS-like_core"/>
    <property type="match status" value="1"/>
</dbReference>
<dbReference type="Gene3D" id="3.30.930.10">
    <property type="entry name" value="Bira Bifunctional Protein, Domain 2"/>
    <property type="match status" value="1"/>
</dbReference>
<dbReference type="HAMAP" id="MF_00125">
    <property type="entry name" value="HisZ"/>
    <property type="match status" value="1"/>
</dbReference>
<dbReference type="InterPro" id="IPR006195">
    <property type="entry name" value="aa-tRNA-synth_II"/>
</dbReference>
<dbReference type="InterPro" id="IPR045864">
    <property type="entry name" value="aa-tRNA-synth_II/BPL/LPL"/>
</dbReference>
<dbReference type="InterPro" id="IPR041715">
    <property type="entry name" value="HisRS-like_core"/>
</dbReference>
<dbReference type="InterPro" id="IPR004516">
    <property type="entry name" value="HisRS/HisZ"/>
</dbReference>
<dbReference type="InterPro" id="IPR004517">
    <property type="entry name" value="HisZ"/>
</dbReference>
<dbReference type="NCBIfam" id="TIGR00443">
    <property type="entry name" value="hisZ_biosyn_reg"/>
    <property type="match status" value="1"/>
</dbReference>
<dbReference type="NCBIfam" id="NF008936">
    <property type="entry name" value="PRK12292.1-3"/>
    <property type="match status" value="1"/>
</dbReference>
<dbReference type="PANTHER" id="PTHR43707:SF6">
    <property type="entry name" value="ATP PHOSPHORIBOSYLTRANSFERASE REGULATORY SUBUNIT"/>
    <property type="match status" value="1"/>
</dbReference>
<dbReference type="PANTHER" id="PTHR43707">
    <property type="entry name" value="HISTIDYL-TRNA SYNTHETASE"/>
    <property type="match status" value="1"/>
</dbReference>
<dbReference type="Pfam" id="PF13393">
    <property type="entry name" value="tRNA-synt_His"/>
    <property type="match status" value="1"/>
</dbReference>
<dbReference type="PIRSF" id="PIRSF001549">
    <property type="entry name" value="His-tRNA_synth"/>
    <property type="match status" value="1"/>
</dbReference>
<dbReference type="SUPFAM" id="SSF55681">
    <property type="entry name" value="Class II aaRS and biotin synthetases"/>
    <property type="match status" value="1"/>
</dbReference>
<dbReference type="PROSITE" id="PS50862">
    <property type="entry name" value="AA_TRNA_LIGASE_II"/>
    <property type="match status" value="1"/>
</dbReference>
<evidence type="ECO:0000255" key="1">
    <source>
        <dbReference type="HAMAP-Rule" id="MF_00125"/>
    </source>
</evidence>
<name>HISZ_CLONN</name>
<keyword id="KW-0028">Amino-acid biosynthesis</keyword>
<keyword id="KW-0963">Cytoplasm</keyword>
<keyword id="KW-0368">Histidine biosynthesis</keyword>
<keyword id="KW-1185">Reference proteome</keyword>
<accession>A0PXP2</accession>
<sequence length="421" mass="48933">MDKLKKYTPDGMRDILFKECEEKLYVEKKLRNLYKLNGFSEIISPTLEFYDVFNFENQPIAQEKMYKLFDRNGRILVLKPDMTMPIGRIVATKVNYKDYPLKLCYTSNIFRINENLNGKTSEITQSGIEIIGIENIKADAEVVITAIESLLQLGLKNFKIELGQSKFFKEIIKNENINKEEVFTLKNLIENKNYVALKDYLKEKTKIIKADTIKILEQLPRMFGDIGVVYEAKNLVNDNEQLKALDEILSLYKIIDKVGLSKYVSIDLGMIQDIDYYTGVIFKGYVEGVGDYILSGGRYDKLIGNFGCDLPSTGFGINIDNIIEALRIYEVLNIRKFRNVILHCENKYLNRAYKIANRVRKNNIICEISLRDTIEDTIKYARSKCVDKIIFIDNREFIKIYDINFNKSKEVIIDNFLEELI</sequence>